<sequence length="380" mass="44357">MSCPYAGNGNEHDDGAVPLSNEVGKIYGEYLMLDKLLDAQCMLSMEDKRPVHDEHLFIITHQAYELWFKQIIFEFDSIRVMLDEEVIDETKTLEIVKRLNRVVLILKLLVDQVPILETMTPLDFMDFRKYLAPASGFQSLQFRLIENKLGVLTEQRVKYNQKYSDVFGNDERALHAIRSSEDGPSLLVLVQRWLERTPGLEEEGFNFWSKFQQSVDQFLAAQVQSALLEPVEWAKNYRLMDIEKRREVYRSIFDPAVHEALVKRGDRRFSHRALQGAIMITFYRDEPRFSQPHQLLTLLMDIDSLITKWRYNHVIMVQRMIGSQQLGTGGSSGYQYLRSTLSDRYKVFLDLFNLSTFLIPREAIPPLDETIRKKLVHKSV</sequence>
<keyword id="KW-0223">Dioxygenase</keyword>
<keyword id="KW-0349">Heme</keyword>
<keyword id="KW-0408">Iron</keyword>
<keyword id="KW-0479">Metal-binding</keyword>
<keyword id="KW-0560">Oxidoreductase</keyword>
<keyword id="KW-1185">Reference proteome</keyword>
<keyword id="KW-0823">Tryptophan catabolism</keyword>
<evidence type="ECO:0000255" key="1">
    <source>
        <dbReference type="HAMAP-Rule" id="MF_03020"/>
    </source>
</evidence>
<evidence type="ECO:0000305" key="2"/>
<dbReference type="EC" id="1.13.11.11" evidence="1"/>
<dbReference type="EMBL" id="CH940653">
    <property type="protein sequence ID" value="EDW62294.1"/>
    <property type="status" value="ALT_FRAME"/>
    <property type="molecule type" value="Genomic_DNA"/>
</dbReference>
<dbReference type="RefSeq" id="XP_002056808.3">
    <property type="nucleotide sequence ID" value="XM_002056772.4"/>
</dbReference>
<dbReference type="SMR" id="B4M818"/>
<dbReference type="FunCoup" id="B4M818">
    <property type="interactions" value="152"/>
</dbReference>
<dbReference type="STRING" id="7244.B4M818"/>
<dbReference type="EnsemblMetazoa" id="XM_002056772.3">
    <property type="protein sequence ID" value="XP_002056808.3"/>
    <property type="gene ID" value="LOC6633596"/>
</dbReference>
<dbReference type="GeneID" id="6633596"/>
<dbReference type="KEGG" id="dvi:6633596"/>
<dbReference type="CTD" id="32026"/>
<dbReference type="eggNOG" id="KOG3906">
    <property type="taxonomic scope" value="Eukaryota"/>
</dbReference>
<dbReference type="InParanoid" id="B4M818"/>
<dbReference type="OrthoDB" id="447477at2759"/>
<dbReference type="UniPathway" id="UPA00271"/>
<dbReference type="UniPathway" id="UPA00333">
    <property type="reaction ID" value="UER00453"/>
</dbReference>
<dbReference type="Proteomes" id="UP000008792">
    <property type="component" value="Unassembled WGS sequence"/>
</dbReference>
<dbReference type="GO" id="GO:0020037">
    <property type="term" value="F:heme binding"/>
    <property type="evidence" value="ECO:0000250"/>
    <property type="project" value="UniProtKB"/>
</dbReference>
<dbReference type="GO" id="GO:0046872">
    <property type="term" value="F:metal ion binding"/>
    <property type="evidence" value="ECO:0007669"/>
    <property type="project" value="UniProtKB-KW"/>
</dbReference>
<dbReference type="GO" id="GO:0004833">
    <property type="term" value="F:tryptophan 2,3-dioxygenase activity"/>
    <property type="evidence" value="ECO:0000250"/>
    <property type="project" value="UniProtKB"/>
</dbReference>
<dbReference type="GO" id="GO:0019442">
    <property type="term" value="P:L-tryptophan catabolic process to acetyl-CoA"/>
    <property type="evidence" value="ECO:0007669"/>
    <property type="project" value="TreeGrafter"/>
</dbReference>
<dbReference type="GO" id="GO:0019441">
    <property type="term" value="P:L-tryptophan catabolic process to kynurenine"/>
    <property type="evidence" value="ECO:0000250"/>
    <property type="project" value="UniProtKB"/>
</dbReference>
<dbReference type="GO" id="GO:0006727">
    <property type="term" value="P:ommochrome biosynthetic process"/>
    <property type="evidence" value="ECO:0007669"/>
    <property type="project" value="UniProtKB-UniRule"/>
</dbReference>
<dbReference type="FunFam" id="1.10.287.3810:FF:000001">
    <property type="entry name" value="Tryptophan 2,3-dioxygenase"/>
    <property type="match status" value="1"/>
</dbReference>
<dbReference type="Gene3D" id="1.10.287.3810">
    <property type="match status" value="1"/>
</dbReference>
<dbReference type="Gene3D" id="1.20.58.480">
    <property type="match status" value="1"/>
</dbReference>
<dbReference type="HAMAP" id="MF_01972">
    <property type="entry name" value="T23O"/>
    <property type="match status" value="1"/>
</dbReference>
<dbReference type="InterPro" id="IPR037217">
    <property type="entry name" value="Trp/Indoleamine_2_3_dOase-like"/>
</dbReference>
<dbReference type="InterPro" id="IPR004981">
    <property type="entry name" value="Trp_2_3_dOase"/>
</dbReference>
<dbReference type="PANTHER" id="PTHR10138">
    <property type="entry name" value="TRYPTOPHAN 2,3-DIOXYGENASE"/>
    <property type="match status" value="1"/>
</dbReference>
<dbReference type="PANTHER" id="PTHR10138:SF0">
    <property type="entry name" value="TRYPTOPHAN 2,3-DIOXYGENASE"/>
    <property type="match status" value="1"/>
</dbReference>
<dbReference type="Pfam" id="PF03301">
    <property type="entry name" value="Trp_dioxygenase"/>
    <property type="match status" value="1"/>
</dbReference>
<dbReference type="SUPFAM" id="SSF140959">
    <property type="entry name" value="Indolic compounds 2,3-dioxygenase-like"/>
    <property type="match status" value="1"/>
</dbReference>
<feature type="chain" id="PRO_0000360882" description="Tryptophan 2,3-dioxygenase">
    <location>
        <begin position="1"/>
        <end position="380"/>
    </location>
</feature>
<feature type="binding site" evidence="1">
    <location>
        <begin position="57"/>
        <end position="61"/>
    </location>
    <ligand>
        <name>substrate</name>
    </ligand>
</feature>
<feature type="binding site" evidence="1">
    <location>
        <position position="128"/>
    </location>
    <ligand>
        <name>substrate</name>
    </ligand>
</feature>
<feature type="binding site" description="axial binding residue" evidence="1">
    <location>
        <position position="313"/>
    </location>
    <ligand>
        <name>heme</name>
        <dbReference type="ChEBI" id="CHEBI:30413"/>
    </ligand>
    <ligandPart>
        <name>Fe</name>
        <dbReference type="ChEBI" id="CHEBI:18248"/>
    </ligandPart>
</feature>
<feature type="binding site" evidence="1">
    <location>
        <position position="328"/>
    </location>
    <ligand>
        <name>substrate</name>
    </ligand>
</feature>
<reference key="1">
    <citation type="journal article" date="2007" name="Nature">
        <title>Evolution of genes and genomes on the Drosophila phylogeny.</title>
        <authorList>
            <consortium name="Drosophila 12 genomes consortium"/>
        </authorList>
    </citation>
    <scope>NUCLEOTIDE SEQUENCE [LARGE SCALE GENOMIC DNA]</scope>
    <source>
        <strain>Tucson 15010-1051.87</strain>
    </source>
</reference>
<organism>
    <name type="scientific">Drosophila virilis</name>
    <name type="common">Fruit fly</name>
    <dbReference type="NCBI Taxonomy" id="7244"/>
    <lineage>
        <taxon>Eukaryota</taxon>
        <taxon>Metazoa</taxon>
        <taxon>Ecdysozoa</taxon>
        <taxon>Arthropoda</taxon>
        <taxon>Hexapoda</taxon>
        <taxon>Insecta</taxon>
        <taxon>Pterygota</taxon>
        <taxon>Neoptera</taxon>
        <taxon>Endopterygota</taxon>
        <taxon>Diptera</taxon>
        <taxon>Brachycera</taxon>
        <taxon>Muscomorpha</taxon>
        <taxon>Ephydroidea</taxon>
        <taxon>Drosophilidae</taxon>
        <taxon>Drosophila</taxon>
    </lineage>
</organism>
<name>T23O_DROVI</name>
<proteinExistence type="inferred from homology"/>
<accession>B4M818</accession>
<comment type="function">
    <text evidence="1">Heme-dependent dioxygenase that catalyzes the oxidative cleavage of the L-tryptophan (L-Trp) pyrrole ring and converts L-tryptophan to N-formyl-L-kynurenine. Catalyzes the oxidative cleavage of the indole moiety.</text>
</comment>
<comment type="catalytic activity">
    <reaction evidence="1">
        <text>L-tryptophan + O2 = N-formyl-L-kynurenine</text>
        <dbReference type="Rhea" id="RHEA:24536"/>
        <dbReference type="ChEBI" id="CHEBI:15379"/>
        <dbReference type="ChEBI" id="CHEBI:57912"/>
        <dbReference type="ChEBI" id="CHEBI:58629"/>
        <dbReference type="EC" id="1.13.11.11"/>
    </reaction>
</comment>
<comment type="cofactor">
    <cofactor evidence="1">
        <name>heme</name>
        <dbReference type="ChEBI" id="CHEBI:30413"/>
    </cofactor>
    <text evidence="1">Binds 1 heme group per subunit.</text>
</comment>
<comment type="pathway">
    <text evidence="1">Amino-acid degradation; L-tryptophan degradation via kynurenine pathway; L-kynurenine from L-tryptophan: step 1/2.</text>
</comment>
<comment type="pathway">
    <text evidence="1">Pigment biosynthesis; ommochrome biosynthesis.</text>
</comment>
<comment type="subunit">
    <text evidence="1">Homotetramer. Dimer of dimers.</text>
</comment>
<comment type="similarity">
    <text evidence="1">Belongs to the tryptophan 2,3-dioxygenase family.</text>
</comment>
<comment type="sequence caution" evidence="2">
    <conflict type="frameshift">
        <sequence resource="EMBL-CDS" id="EDW62294"/>
    </conflict>
</comment>
<gene>
    <name evidence="1" type="primary">v</name>
    <name type="ORF">GJ16721</name>
</gene>
<protein>
    <recommendedName>
        <fullName evidence="1">Tryptophan 2,3-dioxygenase</fullName>
        <shortName evidence="1">TDO</shortName>
        <ecNumber evidence="1">1.13.11.11</ecNumber>
    </recommendedName>
    <alternativeName>
        <fullName evidence="1">Protein vermilion</fullName>
    </alternativeName>
    <alternativeName>
        <fullName evidence="1">Tryptamin 2,3-dioxygenase</fullName>
    </alternativeName>
    <alternativeName>
        <fullName evidence="1">Tryptophan oxygenase</fullName>
        <shortName evidence="1">TO</shortName>
        <shortName evidence="1">TRPO</shortName>
    </alternativeName>
    <alternativeName>
        <fullName evidence="1">Tryptophan pyrrolase</fullName>
    </alternativeName>
    <alternativeName>
        <fullName evidence="1">Tryptophanase</fullName>
    </alternativeName>
</protein>